<dbReference type="EC" id="4.1.3.30" evidence="3 4 5 6"/>
<dbReference type="EMBL" id="CR382132">
    <property type="protein sequence ID" value="CAG78931.1"/>
    <property type="molecule type" value="Genomic_DNA"/>
</dbReference>
<dbReference type="RefSeq" id="XP_506117.1">
    <property type="nucleotide sequence ID" value="XM_506117.1"/>
</dbReference>
<dbReference type="SMR" id="Q6BZP5"/>
<dbReference type="FunCoup" id="Q6BZP5">
    <property type="interactions" value="127"/>
</dbReference>
<dbReference type="STRING" id="284591.Q6BZP5"/>
<dbReference type="EnsemblFungi" id="CAG78931">
    <property type="protein sequence ID" value="CAG78931"/>
    <property type="gene ID" value="YALI0_F31999g"/>
</dbReference>
<dbReference type="KEGG" id="yli:2908123"/>
<dbReference type="VEuPathDB" id="FungiDB:YALI0_F31999g"/>
<dbReference type="HOGENOM" id="CLU_019214_2_2_1"/>
<dbReference type="InParanoid" id="Q6BZP5"/>
<dbReference type="OMA" id="TVPHADF"/>
<dbReference type="OrthoDB" id="81263at4891"/>
<dbReference type="UniPathway" id="UPA00946"/>
<dbReference type="Proteomes" id="UP000001300">
    <property type="component" value="Chromosome F"/>
</dbReference>
<dbReference type="GO" id="GO:0005759">
    <property type="term" value="C:mitochondrial matrix"/>
    <property type="evidence" value="ECO:0000318"/>
    <property type="project" value="GO_Central"/>
</dbReference>
<dbReference type="GO" id="GO:0004451">
    <property type="term" value="F:isocitrate lyase activity"/>
    <property type="evidence" value="ECO:0007669"/>
    <property type="project" value="InterPro"/>
</dbReference>
<dbReference type="GO" id="GO:0046421">
    <property type="term" value="F:methylisocitrate lyase activity"/>
    <property type="evidence" value="ECO:0000318"/>
    <property type="project" value="GO_Central"/>
</dbReference>
<dbReference type="GO" id="GO:0019629">
    <property type="term" value="P:propionate catabolic process, 2-methylcitrate cycle"/>
    <property type="evidence" value="ECO:0000318"/>
    <property type="project" value="GO_Central"/>
</dbReference>
<dbReference type="CDD" id="cd00377">
    <property type="entry name" value="ICL_PEPM"/>
    <property type="match status" value="1"/>
</dbReference>
<dbReference type="FunFam" id="1.10.10.850:FF:000001">
    <property type="entry name" value="Isocitrate lyase"/>
    <property type="match status" value="1"/>
</dbReference>
<dbReference type="Gene3D" id="1.10.10.850">
    <property type="match status" value="1"/>
</dbReference>
<dbReference type="Gene3D" id="3.20.20.60">
    <property type="entry name" value="Phosphoenolpyruvate-binding domains"/>
    <property type="match status" value="1"/>
</dbReference>
<dbReference type="InterPro" id="IPR039556">
    <property type="entry name" value="ICL/PEPM"/>
</dbReference>
<dbReference type="InterPro" id="IPR006254">
    <property type="entry name" value="Isocitrate_lyase"/>
</dbReference>
<dbReference type="InterPro" id="IPR018523">
    <property type="entry name" value="Isocitrate_lyase_ph_CS"/>
</dbReference>
<dbReference type="InterPro" id="IPR015813">
    <property type="entry name" value="Pyrv/PenolPyrv_kinase-like_dom"/>
</dbReference>
<dbReference type="InterPro" id="IPR040442">
    <property type="entry name" value="Pyrv_kinase-like_dom_sf"/>
</dbReference>
<dbReference type="NCBIfam" id="TIGR01346">
    <property type="entry name" value="isocit_lyase"/>
    <property type="match status" value="1"/>
</dbReference>
<dbReference type="PANTHER" id="PTHR21631">
    <property type="entry name" value="ISOCITRATE LYASE/MALATE SYNTHASE"/>
    <property type="match status" value="1"/>
</dbReference>
<dbReference type="PANTHER" id="PTHR21631:SF13">
    <property type="entry name" value="MITOCHONDRIAL 2-METHYLISOCITRATE LYASE ICL2"/>
    <property type="match status" value="1"/>
</dbReference>
<dbReference type="Pfam" id="PF00463">
    <property type="entry name" value="ICL"/>
    <property type="match status" value="1"/>
</dbReference>
<dbReference type="PIRSF" id="PIRSF001362">
    <property type="entry name" value="Isocit_lyase"/>
    <property type="match status" value="1"/>
</dbReference>
<dbReference type="SUPFAM" id="SSF51621">
    <property type="entry name" value="Phosphoenolpyruvate/pyruvate domain"/>
    <property type="match status" value="1"/>
</dbReference>
<dbReference type="PROSITE" id="PS00161">
    <property type="entry name" value="ISOCITRATE_LYASE"/>
    <property type="match status" value="1"/>
</dbReference>
<keyword id="KW-0456">Lyase</keyword>
<keyword id="KW-0496">Mitochondrion</keyword>
<keyword id="KW-1185">Reference proteome</keyword>
<keyword id="KW-0809">Transit peptide</keyword>
<feature type="transit peptide" description="Mitochondrion" evidence="1">
    <location>
        <begin position="1"/>
        <end position="19"/>
    </location>
</feature>
<feature type="chain" id="PRO_0000433360" description="2-methylisocitrate lyase, mitochondrial" evidence="1">
    <location>
        <begin position="20"/>
        <end position="565"/>
    </location>
</feature>
<feature type="active site" evidence="2">
    <location>
        <position position="238"/>
    </location>
</feature>
<reference key="1">
    <citation type="journal article" date="2004" name="Nature">
        <title>Genome evolution in yeasts.</title>
        <authorList>
            <person name="Dujon B."/>
            <person name="Sherman D."/>
            <person name="Fischer G."/>
            <person name="Durrens P."/>
            <person name="Casaregola S."/>
            <person name="Lafontaine I."/>
            <person name="de Montigny J."/>
            <person name="Marck C."/>
            <person name="Neuveglise C."/>
            <person name="Talla E."/>
            <person name="Goffard N."/>
            <person name="Frangeul L."/>
            <person name="Aigle M."/>
            <person name="Anthouard V."/>
            <person name="Babour A."/>
            <person name="Barbe V."/>
            <person name="Barnay S."/>
            <person name="Blanchin S."/>
            <person name="Beckerich J.-M."/>
            <person name="Beyne E."/>
            <person name="Bleykasten C."/>
            <person name="Boisrame A."/>
            <person name="Boyer J."/>
            <person name="Cattolico L."/>
            <person name="Confanioleri F."/>
            <person name="de Daruvar A."/>
            <person name="Despons L."/>
            <person name="Fabre E."/>
            <person name="Fairhead C."/>
            <person name="Ferry-Dumazet H."/>
            <person name="Groppi A."/>
            <person name="Hantraye F."/>
            <person name="Hennequin C."/>
            <person name="Jauniaux N."/>
            <person name="Joyet P."/>
            <person name="Kachouri R."/>
            <person name="Kerrest A."/>
            <person name="Koszul R."/>
            <person name="Lemaire M."/>
            <person name="Lesur I."/>
            <person name="Ma L."/>
            <person name="Muller H."/>
            <person name="Nicaud J.-M."/>
            <person name="Nikolski M."/>
            <person name="Oztas S."/>
            <person name="Ozier-Kalogeropoulos O."/>
            <person name="Pellenz S."/>
            <person name="Potier S."/>
            <person name="Richard G.-F."/>
            <person name="Straub M.-L."/>
            <person name="Suleau A."/>
            <person name="Swennen D."/>
            <person name="Tekaia F."/>
            <person name="Wesolowski-Louvel M."/>
            <person name="Westhof E."/>
            <person name="Wirth B."/>
            <person name="Zeniou-Meyer M."/>
            <person name="Zivanovic Y."/>
            <person name="Bolotin-Fukuhara M."/>
            <person name="Thierry A."/>
            <person name="Bouchier C."/>
            <person name="Caudron B."/>
            <person name="Scarpelli C."/>
            <person name="Gaillardin C."/>
            <person name="Weissenbach J."/>
            <person name="Wincker P."/>
            <person name="Souciet J.-L."/>
        </authorList>
    </citation>
    <scope>NUCLEOTIDE SEQUENCE [LARGE SCALE GENOMIC DNA]</scope>
    <source>
        <strain>CLIB 122 / E 150</strain>
    </source>
</reference>
<reference key="2">
    <citation type="journal article" date="1976" name="Agric. Biol. Chem.">
        <title>Distinction between isocitrate lyase and methylisocitrate lyase in Candida lipolytica.</title>
        <authorList>
            <person name="Tabuchi T."/>
            <person name="Satoh T."/>
        </authorList>
    </citation>
    <scope>FUNCTION</scope>
    <scope>CATALYTIC ACTIVITY</scope>
    <scope>BIOPHYSICOCHEMICAL PROPERTIES</scope>
</reference>
<reference key="3">
    <citation type="journal article" date="1977" name="Agric. Biol. Chem.">
        <title>Purification and properties of methylisocitrate lyase, a key enzyme in propionate metabolism, from Candida lipolytica.</title>
        <authorList>
            <person name="Tabuchi T."/>
            <person name="Satoh T."/>
        </authorList>
    </citation>
    <scope>FUNCTION</scope>
    <scope>CATALYTIC ACTIVITY</scope>
    <scope>BIOPHYSICOCHEMICAL PROPERTIES</scope>
    <scope>COFACTOR</scope>
    <scope>ACTIVITY REGULATION</scope>
</reference>
<reference key="4">
    <citation type="journal article" date="1978" name="Agric. Biol. Chem.">
        <title>Regulation of enzyme synthesis of the glycolate, the citric acid, and the methylcitric acid cycles in Candida lipolytica.</title>
        <authorList>
            <person name="Tabuchi T."/>
            <person name="Igoshi K."/>
        </authorList>
    </citation>
    <scope>FUNCTION</scope>
    <scope>CATALYTIC ACTIVITY</scope>
    <scope>INDUCTION</scope>
</reference>
<reference key="5">
    <citation type="journal article" date="1982" name="Eur. J. Biochem.">
        <title>Subcellular localization of the methylcitric-acid-cycle enzymes in propionate metabolism of Yarrowia lipolytica.</title>
        <authorList>
            <person name="Uchiyama H."/>
            <person name="Ando M."/>
            <person name="Toyonaka Y."/>
            <person name="Tabuchi T."/>
        </authorList>
    </citation>
    <scope>SUBCELLULAR LOCATION</scope>
    <scope>FUNCTION</scope>
    <scope>CATALYTIC ACTIVITY</scope>
</reference>
<proteinExistence type="evidence at protein level"/>
<accession>Q6BZP5</accession>
<gene>
    <name type="ordered locus">YALI0F31999g</name>
</gene>
<name>ACEB_YARLI</name>
<comment type="function">
    <text evidence="3 4 5 6">Component of the methylcitrate cycle that catalyzes the formation of pyruvate and succinate from 2-methylisocitrate during the metabolism of endogenous propionyl-CoA.</text>
</comment>
<comment type="catalytic activity">
    <reaction evidence="3 4 5 6">
        <text>(2S,3R)-3-hydroxybutane-1,2,3-tricarboxylate = pyruvate + succinate</text>
        <dbReference type="Rhea" id="RHEA:16809"/>
        <dbReference type="ChEBI" id="CHEBI:15361"/>
        <dbReference type="ChEBI" id="CHEBI:30031"/>
        <dbReference type="ChEBI" id="CHEBI:57429"/>
        <dbReference type="EC" id="4.1.3.30"/>
    </reaction>
</comment>
<comment type="cofactor">
    <cofactor evidence="5">
        <name>Mg(2+)</name>
        <dbReference type="ChEBI" id="CHEBI:18420"/>
    </cofactor>
</comment>
<comment type="activity regulation">
    <text evidence="5">Inhibited in the presence of NADH and NADPH. When Mg(2+) is present, Cu(2+), Hg(2+) and Zn(2+) inhibit the enzyme activity in some extent.</text>
</comment>
<comment type="biophysicochemical properties">
    <kinetics>
        <KM evidence="5">0.77 mM for (2S,3R)-3-hydroxybutane-1,2,3-tricarboxylate</KM>
        <KM evidence="5">0.6 mM for magnesium chloride (MgCl(2))</KM>
        <KM evidence="5">0.43 mM for cysteine</KM>
    </kinetics>
    <phDependence>
        <text evidence="4 5">Optimum pH is 7.3-7.8.</text>
    </phDependence>
    <temperatureDependence>
        <text evidence="5">Optimum temperature is 40 degrees Celsius.</text>
    </temperatureDependence>
</comment>
<comment type="pathway">
    <text evidence="11">Organic acid metabolism; propanoate degradation.</text>
</comment>
<comment type="subcellular location">
    <subcellularLocation>
        <location evidence="11">Mitochondrion matrix</location>
    </subcellularLocation>
</comment>
<comment type="induction">
    <text evidence="6">Repressed by glucose.</text>
</comment>
<comment type="similarity">
    <text evidence="11">Belongs to the isocitrate lyase/PEP mutase superfamily. Isocitrate lyase family.</text>
</comment>
<organism>
    <name type="scientific">Yarrowia lipolytica (strain CLIB 122 / E 150)</name>
    <name type="common">Yeast</name>
    <name type="synonym">Candida lipolytica</name>
    <dbReference type="NCBI Taxonomy" id="284591"/>
    <lineage>
        <taxon>Eukaryota</taxon>
        <taxon>Fungi</taxon>
        <taxon>Dikarya</taxon>
        <taxon>Ascomycota</taxon>
        <taxon>Saccharomycotina</taxon>
        <taxon>Dipodascomycetes</taxon>
        <taxon>Dipodascales</taxon>
        <taxon>Dipodascales incertae sedis</taxon>
        <taxon>Yarrowia</taxon>
    </lineage>
</organism>
<evidence type="ECO:0000255" key="1"/>
<evidence type="ECO:0000255" key="2">
    <source>
        <dbReference type="PROSITE-ProRule" id="PRU10119"/>
    </source>
</evidence>
<evidence type="ECO:0000269" key="3">
    <source>
    </source>
</evidence>
<evidence type="ECO:0000269" key="4">
    <source ref="2"/>
</evidence>
<evidence type="ECO:0000269" key="5">
    <source ref="3"/>
</evidence>
<evidence type="ECO:0000269" key="6">
    <source ref="4"/>
</evidence>
<evidence type="ECO:0000303" key="7">
    <source>
    </source>
</evidence>
<evidence type="ECO:0000303" key="8">
    <source ref="2"/>
</evidence>
<evidence type="ECO:0000303" key="9">
    <source ref="3"/>
</evidence>
<evidence type="ECO:0000303" key="10">
    <source ref="4"/>
</evidence>
<evidence type="ECO:0000305" key="11"/>
<protein>
    <recommendedName>
        <fullName evidence="7 8 9 10">2-methylisocitrate lyase, mitochondrial</fullName>
        <ecNumber evidence="3 4 5 6">4.1.3.30</ecNumber>
    </recommendedName>
</protein>
<sequence>MLRTRFINSVNSARAMSRNINTLSQFPYPTLQQEESFFKSQVEDIEKWWASPRYEGIKRPYTAEKVAIHRGTLPQTYASSVQAEKLFNIFTERGKQGLPVHTTGSVDPVQMTQSAPHQEVVYISGWACSSLLTTTNEVSPDFGDYPYDTVPNQVDRIFRAQGLHDKKAWHEWMSLSHEERVKRDQEGKGRIDYLRPIIADADTGHGGLSAVMKLAKLFAERGAAAIHLEDQLHGGKKCGHLAGKVIVPTGSHISRLNATRMQWDIMGCSNLVIARTDSESAKLLSSAADPSDHEYILGVVKPIKPLAEVLLTAEANGATADMVNKLELEWTKEAEMMTYDEAVQRALTEAGKSDKIEEYLTKAKGKSNFEARQIADELAGKHIFFDWDAPKTREGHYHVQCGIEPAIKRALAFAPYADLIWLETKTPDLAQAQAFAKRIREKFPGKWLVYNLSPSFNWSAHGYSDEQLKSFVWDLAKSGFVMQLISLAGLHSNAVATHELSTRFKTEGMKAYVDLVQRKEKELGCDVLTHQKWSGANYLDSIISTVQSGSSGTSSTGGDSTENQF</sequence>